<feature type="propeptide" id="PRO_0000008942" evidence="1">
    <location>
        <begin position="1"/>
        <end position="12"/>
    </location>
</feature>
<feature type="chain" id="PRO_0000008943" description="Fibroblast growth factor 2">
    <location>
        <begin position="13"/>
        <end position="158"/>
    </location>
</feature>
<feature type="region of interest" description="Heparin-binding" evidence="1">
    <location>
        <begin position="131"/>
        <end position="147"/>
    </location>
</feature>
<feature type="binding site" evidence="1">
    <location>
        <position position="39"/>
    </location>
    <ligand>
        <name>heparin</name>
        <dbReference type="ChEBI" id="CHEBI:28304"/>
    </ligand>
</feature>
<feature type="site" description="Important for interaction with integrin" evidence="2">
    <location>
        <position position="131"/>
    </location>
</feature>
<feature type="site" description="Important for interaction with integrin" evidence="2">
    <location>
        <position position="132"/>
    </location>
</feature>
<feature type="site" description="Important for interaction with integrin" evidence="2">
    <location>
        <position position="137"/>
    </location>
</feature>
<name>FGF2_CHICK</name>
<organism>
    <name type="scientific">Gallus gallus</name>
    <name type="common">Chicken</name>
    <dbReference type="NCBI Taxonomy" id="9031"/>
    <lineage>
        <taxon>Eukaryota</taxon>
        <taxon>Metazoa</taxon>
        <taxon>Chordata</taxon>
        <taxon>Craniata</taxon>
        <taxon>Vertebrata</taxon>
        <taxon>Euteleostomi</taxon>
        <taxon>Archelosauria</taxon>
        <taxon>Archosauria</taxon>
        <taxon>Dinosauria</taxon>
        <taxon>Saurischia</taxon>
        <taxon>Theropoda</taxon>
        <taxon>Coelurosauria</taxon>
        <taxon>Aves</taxon>
        <taxon>Neognathae</taxon>
        <taxon>Galloanserae</taxon>
        <taxon>Galliformes</taxon>
        <taxon>Phasianidae</taxon>
        <taxon>Phasianinae</taxon>
        <taxon>Gallus</taxon>
    </lineage>
</organism>
<reference key="1">
    <citation type="journal article" date="1993" name="Dev. Biol.">
        <title>Expression of alternatively spliced bFGF first coding exons and antisense mRNAs during chicken embryogenesis.</title>
        <authorList>
            <person name="Borja A.Z."/>
            <person name="Zeller R."/>
            <person name="Meijers C."/>
        </authorList>
    </citation>
    <scope>NUCLEOTIDE SEQUENCE [MRNA]</scope>
</reference>
<gene>
    <name type="primary">FGF2</name>
</gene>
<proteinExistence type="evidence at transcript level"/>
<accession>P48800</accession>
<protein>
    <recommendedName>
        <fullName>Fibroblast growth factor 2</fullName>
        <shortName>FGF-2</shortName>
    </recommendedName>
    <alternativeName>
        <fullName>Basic fibroblast growth factor</fullName>
        <shortName>bFGF</shortName>
    </alternativeName>
    <alternativeName>
        <fullName>Heparin-binding growth factor 2</fullName>
        <shortName>HBGF-2</shortName>
    </alternativeName>
</protein>
<comment type="function">
    <text evidence="2">Acts as a ligand for FGFR1, FGFR2, FGFR3 and FGFR4 (By similarity). Also acts as an integrin ligand which is required for FGF2 signaling (By similarity). Plays an important role in the regulation of cell survival, cell division, cell differentiation and cell migration (By similarity). Functions as a potent mitogen in vitro (By similarity). Can induce angiogenesis (By similarity).</text>
</comment>
<comment type="subcellular location">
    <subcellularLocation>
        <location evidence="2">Secreted</location>
    </subcellularLocation>
    <subcellularLocation>
        <location evidence="2">Nucleus</location>
    </subcellularLocation>
    <text evidence="2">Exported from cells by an endoplasmic reticulum (ER)/Golgi-independent mechanism (By similarity). Unconventional secretion of FGF2 occurs by direct translocation across the plasma membrane (By similarity). Binding of exogenous FGF2 to FGFR facilitates endocytosis followed by translocation of FGF2 across endosomal membrane into the cytosol (By similarity). Nuclear import from the cytosol requires the classical nuclear import machinery (By similarity).</text>
</comment>
<comment type="similarity">
    <text evidence="3">Belongs to the heparin-binding growth factors family.</text>
</comment>
<sequence>MAAGAAGSITTLPALPDDGGGGAFPPGHFKDPKRLYCKNGGFFLRINPDGRVDGVREKSDPHIKLQLQAEERGVVSIKGVSANRFLAMKEDGRLLALKCATEECFFFERLESNNYNTYRSRKYSDWYVALKRTGQYKPGPKTGPGQKAILFLPMSAKS</sequence>
<keyword id="KW-0037">Angiogenesis</keyword>
<keyword id="KW-0217">Developmental protein</keyword>
<keyword id="KW-0221">Differentiation</keyword>
<keyword id="KW-0339">Growth factor</keyword>
<keyword id="KW-0358">Heparin-binding</keyword>
<keyword id="KW-0497">Mitogen</keyword>
<keyword id="KW-0539">Nucleus</keyword>
<keyword id="KW-1185">Reference proteome</keyword>
<keyword id="KW-0964">Secreted</keyword>
<dbReference type="EMBL" id="M95707">
    <property type="protein sequence ID" value="AAA48617.1"/>
    <property type="molecule type" value="mRNA"/>
</dbReference>
<dbReference type="RefSeq" id="NP_990764.1">
    <property type="nucleotide sequence ID" value="NM_205433.2"/>
</dbReference>
<dbReference type="SMR" id="P48800"/>
<dbReference type="FunCoup" id="P48800">
    <property type="interactions" value="183"/>
</dbReference>
<dbReference type="STRING" id="9031.ENSGALP00000031519"/>
<dbReference type="PaxDb" id="9031-ENSGALP00000031519"/>
<dbReference type="Ensembl" id="ENSGALT00000138172">
    <property type="protein sequence ID" value="ENSGALP00000092987"/>
    <property type="gene ID" value="ENSGALG00000064548"/>
</dbReference>
<dbReference type="Ensembl" id="ENSGALT00010009865.1">
    <property type="protein sequence ID" value="ENSGALP00010005751.1"/>
    <property type="gene ID" value="ENSGALG00010004219.1"/>
</dbReference>
<dbReference type="GeneID" id="396413"/>
<dbReference type="KEGG" id="gga:396413"/>
<dbReference type="CTD" id="2247"/>
<dbReference type="VEuPathDB" id="HostDB:geneid_396413"/>
<dbReference type="eggNOG" id="KOG3885">
    <property type="taxonomic scope" value="Eukaryota"/>
</dbReference>
<dbReference type="GeneTree" id="ENSGT00940000161583"/>
<dbReference type="HOGENOM" id="CLU_081609_5_1_1"/>
<dbReference type="InParanoid" id="P48800"/>
<dbReference type="OMA" id="KGVCSNR"/>
<dbReference type="OrthoDB" id="5987799at2759"/>
<dbReference type="PhylomeDB" id="P48800"/>
<dbReference type="Reactome" id="R-GGA-109704">
    <property type="pathway name" value="PI3K Cascade"/>
</dbReference>
<dbReference type="Reactome" id="R-GGA-1257604">
    <property type="pathway name" value="PIP3 activates AKT signaling"/>
</dbReference>
<dbReference type="Reactome" id="R-GGA-190322">
    <property type="pathway name" value="FGFR4 ligand binding and activation"/>
</dbReference>
<dbReference type="Reactome" id="R-GGA-190370">
    <property type="pathway name" value="FGFR1b ligand binding and activation"/>
</dbReference>
<dbReference type="Reactome" id="R-GGA-190372">
    <property type="pathway name" value="FGFR3c ligand binding and activation"/>
</dbReference>
<dbReference type="Reactome" id="R-GGA-190373">
    <property type="pathway name" value="FGFR1c ligand binding and activation"/>
</dbReference>
<dbReference type="Reactome" id="R-GGA-190375">
    <property type="pathway name" value="FGFR2c ligand binding and activation"/>
</dbReference>
<dbReference type="Reactome" id="R-GGA-3000170">
    <property type="pathway name" value="Syndecan interactions"/>
</dbReference>
<dbReference type="Reactome" id="R-GGA-5654219">
    <property type="pathway name" value="Phospholipase C-mediated cascade: FGFR1"/>
</dbReference>
<dbReference type="Reactome" id="R-GGA-5654221">
    <property type="pathway name" value="Phospholipase C-mediated cascade, FGFR2"/>
</dbReference>
<dbReference type="Reactome" id="R-GGA-5654227">
    <property type="pathway name" value="Phospholipase C-mediated cascade, FGFR3"/>
</dbReference>
<dbReference type="Reactome" id="R-GGA-5654228">
    <property type="pathway name" value="Phospholipase C-mediated cascade, FGFR4"/>
</dbReference>
<dbReference type="Reactome" id="R-GGA-5654687">
    <property type="pathway name" value="Downstream signaling of activated FGFR1"/>
</dbReference>
<dbReference type="Reactome" id="R-GGA-5654688">
    <property type="pathway name" value="SHC-mediated cascade:FGFR1"/>
</dbReference>
<dbReference type="Reactome" id="R-GGA-5654689">
    <property type="pathway name" value="PI-3K cascade:FGFR1"/>
</dbReference>
<dbReference type="Reactome" id="R-GGA-5654693">
    <property type="pathway name" value="FRS-mediated FGFR1 signaling"/>
</dbReference>
<dbReference type="Reactome" id="R-GGA-5654695">
    <property type="pathway name" value="PI-3K cascade:FGFR2"/>
</dbReference>
<dbReference type="Reactome" id="R-GGA-5654699">
    <property type="pathway name" value="SHC-mediated cascade:FGFR2"/>
</dbReference>
<dbReference type="Reactome" id="R-GGA-5654700">
    <property type="pathway name" value="FRS-mediated FGFR2 signaling"/>
</dbReference>
<dbReference type="Reactome" id="R-GGA-5654704">
    <property type="pathway name" value="SHC-mediated cascade:FGFR3"/>
</dbReference>
<dbReference type="Reactome" id="R-GGA-5654706">
    <property type="pathway name" value="FRS-mediated FGFR3 signaling"/>
</dbReference>
<dbReference type="Reactome" id="R-GGA-5654710">
    <property type="pathway name" value="PI-3K cascade:FGFR3"/>
</dbReference>
<dbReference type="Reactome" id="R-GGA-5654712">
    <property type="pathway name" value="FRS-mediated FGFR4 signaling"/>
</dbReference>
<dbReference type="Reactome" id="R-GGA-5654719">
    <property type="pathway name" value="SHC-mediated cascade:FGFR4"/>
</dbReference>
<dbReference type="Reactome" id="R-GGA-5654720">
    <property type="pathway name" value="PI-3K cascade:FGFR4"/>
</dbReference>
<dbReference type="Reactome" id="R-GGA-5654726">
    <property type="pathway name" value="Negative regulation of FGFR1 signaling"/>
</dbReference>
<dbReference type="Reactome" id="R-GGA-5654727">
    <property type="pathway name" value="Negative regulation of FGFR2 signaling"/>
</dbReference>
<dbReference type="Reactome" id="R-GGA-5654732">
    <property type="pathway name" value="Negative regulation of FGFR3 signaling"/>
</dbReference>
<dbReference type="Reactome" id="R-GGA-5654733">
    <property type="pathway name" value="Negative regulation of FGFR4 signaling"/>
</dbReference>
<dbReference type="Reactome" id="R-GGA-5658623">
    <property type="pathway name" value="FGFRL1 modulation of FGFR1 signaling"/>
</dbReference>
<dbReference type="Reactome" id="R-GGA-5673001">
    <property type="pathway name" value="RAF/MAP kinase cascade"/>
</dbReference>
<dbReference type="Reactome" id="R-GGA-6811558">
    <property type="pathway name" value="PI5P, PP2A and IER3 Regulate PI3K/AKT Signaling"/>
</dbReference>
<dbReference type="Reactome" id="R-GGA-9839397">
    <property type="pathway name" value="TGFBR3 regulates FGF2 signaling"/>
</dbReference>
<dbReference type="PRO" id="PR:P48800"/>
<dbReference type="Proteomes" id="UP000000539">
    <property type="component" value="Chromosome 4"/>
</dbReference>
<dbReference type="Bgee" id="ENSGALG00000011835">
    <property type="expression patterns" value="Expressed in testis and 12 other cell types or tissues"/>
</dbReference>
<dbReference type="GO" id="GO:0005737">
    <property type="term" value="C:cytoplasm"/>
    <property type="evidence" value="ECO:0000318"/>
    <property type="project" value="GO_Central"/>
</dbReference>
<dbReference type="GO" id="GO:0005829">
    <property type="term" value="C:cytosol"/>
    <property type="evidence" value="ECO:0000314"/>
    <property type="project" value="AgBase"/>
</dbReference>
<dbReference type="GO" id="GO:0005615">
    <property type="term" value="C:extracellular space"/>
    <property type="evidence" value="ECO:0000314"/>
    <property type="project" value="AgBase"/>
</dbReference>
<dbReference type="GO" id="GO:0005730">
    <property type="term" value="C:nucleolus"/>
    <property type="evidence" value="ECO:0000314"/>
    <property type="project" value="AgBase"/>
</dbReference>
<dbReference type="GO" id="GO:0005634">
    <property type="term" value="C:nucleus"/>
    <property type="evidence" value="ECO:0000314"/>
    <property type="project" value="AgBase"/>
</dbReference>
<dbReference type="GO" id="GO:0005104">
    <property type="term" value="F:fibroblast growth factor receptor binding"/>
    <property type="evidence" value="ECO:0000318"/>
    <property type="project" value="GO_Central"/>
</dbReference>
<dbReference type="GO" id="GO:0008083">
    <property type="term" value="F:growth factor activity"/>
    <property type="evidence" value="ECO:0000318"/>
    <property type="project" value="GO_Central"/>
</dbReference>
<dbReference type="GO" id="GO:0008201">
    <property type="term" value="F:heparin binding"/>
    <property type="evidence" value="ECO:0000353"/>
    <property type="project" value="AgBase"/>
</dbReference>
<dbReference type="GO" id="GO:0005178">
    <property type="term" value="F:integrin binding"/>
    <property type="evidence" value="ECO:0000250"/>
    <property type="project" value="UniProtKB"/>
</dbReference>
<dbReference type="GO" id="GO:0001525">
    <property type="term" value="P:angiogenesis"/>
    <property type="evidence" value="ECO:0007669"/>
    <property type="project" value="UniProtKB-KW"/>
</dbReference>
<dbReference type="GO" id="GO:0007420">
    <property type="term" value="P:brain development"/>
    <property type="evidence" value="ECO:0000315"/>
    <property type="project" value="AgBase"/>
</dbReference>
<dbReference type="GO" id="GO:0030154">
    <property type="term" value="P:cell differentiation"/>
    <property type="evidence" value="ECO:0000303"/>
    <property type="project" value="AgBase"/>
</dbReference>
<dbReference type="GO" id="GO:0051301">
    <property type="term" value="P:cell division"/>
    <property type="evidence" value="ECO:0000315"/>
    <property type="project" value="AgBase"/>
</dbReference>
<dbReference type="GO" id="GO:0008283">
    <property type="term" value="P:cell population proliferation"/>
    <property type="evidence" value="ECO:0000315"/>
    <property type="project" value="AgBase"/>
</dbReference>
<dbReference type="GO" id="GO:0003347">
    <property type="term" value="P:epicardial cell to mesenchymal cell transition"/>
    <property type="evidence" value="ECO:0000304"/>
    <property type="project" value="DFLAT"/>
</dbReference>
<dbReference type="GO" id="GO:0008543">
    <property type="term" value="P:fibroblast growth factor receptor signaling pathway"/>
    <property type="evidence" value="ECO:0000318"/>
    <property type="project" value="GO_Central"/>
</dbReference>
<dbReference type="GO" id="GO:0014843">
    <property type="term" value="P:growth factor dependent regulation of skeletal muscle satellite cell proliferation"/>
    <property type="evidence" value="ECO:0000250"/>
    <property type="project" value="AgBase"/>
</dbReference>
<dbReference type="GO" id="GO:0070660">
    <property type="term" value="P:inner ear receptor cell differentiation involved in inner ear sensory epithelium regeneration"/>
    <property type="evidence" value="ECO:0000303"/>
    <property type="project" value="AgBase"/>
</dbReference>
<dbReference type="GO" id="GO:0002089">
    <property type="term" value="P:lens morphogenesis in camera-type eye"/>
    <property type="evidence" value="ECO:0000303"/>
    <property type="project" value="AgBase"/>
</dbReference>
<dbReference type="GO" id="GO:0001707">
    <property type="term" value="P:mesoderm formation"/>
    <property type="evidence" value="ECO:0000303"/>
    <property type="project" value="AgBase"/>
</dbReference>
<dbReference type="GO" id="GO:0072248">
    <property type="term" value="P:metanephric podocyte differentiation"/>
    <property type="evidence" value="ECO:0000303"/>
    <property type="project" value="AgBase"/>
</dbReference>
<dbReference type="GO" id="GO:0003407">
    <property type="term" value="P:neural retina development"/>
    <property type="evidence" value="ECO:0000304"/>
    <property type="project" value="AgBase"/>
</dbReference>
<dbReference type="GO" id="GO:0060563">
    <property type="term" value="P:neuroepithelial cell differentiation"/>
    <property type="evidence" value="ECO:0000315"/>
    <property type="project" value="AgBase"/>
</dbReference>
<dbReference type="GO" id="GO:0022008">
    <property type="term" value="P:neurogenesis"/>
    <property type="evidence" value="ECO:0000315"/>
    <property type="project" value="AgBase"/>
</dbReference>
<dbReference type="GO" id="GO:0045766">
    <property type="term" value="P:positive regulation of angiogenesis"/>
    <property type="evidence" value="ECO:0000315"/>
    <property type="project" value="AgBase"/>
</dbReference>
<dbReference type="GO" id="GO:0043536">
    <property type="term" value="P:positive regulation of blood vessel endothelial cell migration"/>
    <property type="evidence" value="ECO:0000250"/>
    <property type="project" value="UniProtKB"/>
</dbReference>
<dbReference type="GO" id="GO:0051781">
    <property type="term" value="P:positive regulation of cell division"/>
    <property type="evidence" value="ECO:0007669"/>
    <property type="project" value="UniProtKB-KW"/>
</dbReference>
<dbReference type="GO" id="GO:0090050">
    <property type="term" value="P:positive regulation of cell migration involved in sprouting angiogenesis"/>
    <property type="evidence" value="ECO:0000250"/>
    <property type="project" value="UniProtKB"/>
</dbReference>
<dbReference type="GO" id="GO:0008284">
    <property type="term" value="P:positive regulation of cell population proliferation"/>
    <property type="evidence" value="ECO:0000318"/>
    <property type="project" value="GO_Central"/>
</dbReference>
<dbReference type="GO" id="GO:0043410">
    <property type="term" value="P:positive regulation of MAPK cascade"/>
    <property type="evidence" value="ECO:0000318"/>
    <property type="project" value="GO_Central"/>
</dbReference>
<dbReference type="GO" id="GO:0010756">
    <property type="term" value="P:positive regulation of plasminogen activation"/>
    <property type="evidence" value="ECO:0000315"/>
    <property type="project" value="AgBase"/>
</dbReference>
<dbReference type="GO" id="GO:0030334">
    <property type="term" value="P:regulation of cell migration"/>
    <property type="evidence" value="ECO:0000318"/>
    <property type="project" value="GO_Central"/>
</dbReference>
<dbReference type="GO" id="GO:0072089">
    <property type="term" value="P:stem cell proliferation"/>
    <property type="evidence" value="ECO:0000315"/>
    <property type="project" value="AgBase"/>
</dbReference>
<dbReference type="GO" id="GO:0001894">
    <property type="term" value="P:tissue homeostasis"/>
    <property type="evidence" value="ECO:0000303"/>
    <property type="project" value="AgBase"/>
</dbReference>
<dbReference type="GO" id="GO:0042060">
    <property type="term" value="P:wound healing"/>
    <property type="evidence" value="ECO:0000303"/>
    <property type="project" value="AgBase"/>
</dbReference>
<dbReference type="CDD" id="cd23314">
    <property type="entry name" value="beta-trefoil_FGF2"/>
    <property type="match status" value="1"/>
</dbReference>
<dbReference type="FunFam" id="2.80.10.50:FF:000020">
    <property type="entry name" value="Fibroblast growth factor 1"/>
    <property type="match status" value="1"/>
</dbReference>
<dbReference type="Gene3D" id="2.80.10.50">
    <property type="match status" value="1"/>
</dbReference>
<dbReference type="InterPro" id="IPR002209">
    <property type="entry name" value="Fibroblast_GF_fam"/>
</dbReference>
<dbReference type="InterPro" id="IPR008996">
    <property type="entry name" value="IL1/FGF"/>
</dbReference>
<dbReference type="PANTHER" id="PTHR11486">
    <property type="entry name" value="FIBROBLAST GROWTH FACTOR"/>
    <property type="match status" value="1"/>
</dbReference>
<dbReference type="Pfam" id="PF00167">
    <property type="entry name" value="FGF"/>
    <property type="match status" value="1"/>
</dbReference>
<dbReference type="PRINTS" id="PR00263">
    <property type="entry name" value="HBGFFGF"/>
</dbReference>
<dbReference type="PRINTS" id="PR00262">
    <property type="entry name" value="IL1HBGF"/>
</dbReference>
<dbReference type="SMART" id="SM00442">
    <property type="entry name" value="FGF"/>
    <property type="match status" value="1"/>
</dbReference>
<dbReference type="SUPFAM" id="SSF50353">
    <property type="entry name" value="Cytokine"/>
    <property type="match status" value="1"/>
</dbReference>
<dbReference type="PROSITE" id="PS00247">
    <property type="entry name" value="HBGF_FGF"/>
    <property type="match status" value="1"/>
</dbReference>
<evidence type="ECO:0000250" key="1"/>
<evidence type="ECO:0000250" key="2">
    <source>
        <dbReference type="UniProtKB" id="P09038"/>
    </source>
</evidence>
<evidence type="ECO:0000305" key="3"/>